<organism>
    <name type="scientific">Mycobacterium tuberculosis (strain ATCC 35801 / TMC 107 / Erdman)</name>
    <dbReference type="NCBI Taxonomy" id="652616"/>
    <lineage>
        <taxon>Bacteria</taxon>
        <taxon>Bacillati</taxon>
        <taxon>Actinomycetota</taxon>
        <taxon>Actinomycetes</taxon>
        <taxon>Mycobacteriales</taxon>
        <taxon>Mycobacteriaceae</taxon>
        <taxon>Mycobacterium</taxon>
        <taxon>Mycobacterium tuberculosis complex</taxon>
    </lineage>
</organism>
<sequence length="393" mass="42969">MTGPLAAARSVAATKSMTAPTVDERPDIKKGLAGVVVDTTAISKVVPQTNSLTYRGYPVQDLAARCSFEQVAFLLWRGELPTDAELALFSQRERASRRVDRSMLSLLAKLPDNCHPMDVVRTAISYLGAEDPDEDDAAANRAKAMRMMAVLPTIVAIDMRRRRGLPPIAPHSGLGYAQNFLHMCFGEVPETAVVSAFEQSMILYAEHGFNASTFAARVVTSTQSDIYSAVTGAIGALKGRLHGGANEAVMHDMIEIGDPANAREWLRAKLARKEKIMGFGHRVYRHGDSRVPTMKRALERVGTVRDGQRWLDIYQVLAAEMASATGILPNLDFPTGPAYYLMGFDIASFTPIFVMSRITGWTAHIMEQATANALIRPLSAYCGHEQRVLPGTF</sequence>
<reference key="1">
    <citation type="journal article" date="2012" name="J. Bacteriol.">
        <title>Complete annotated genome sequence of Mycobacterium tuberculosis Erdman.</title>
        <authorList>
            <person name="Miyoshi-Akiyama T."/>
            <person name="Matsumura K."/>
            <person name="Iwai H."/>
            <person name="Funatogawa K."/>
            <person name="Kirikae T."/>
        </authorList>
    </citation>
    <scope>NUCLEOTIDE SEQUENCE [LARGE SCALE GENOMIC DNA]</scope>
    <source>
        <strain>ATCC 35801 / TMC 107 / Erdman</strain>
    </source>
</reference>
<reference key="2">
    <citation type="submission" date="2014-04" db="EMBL/GenBank/DDBJ databases">
        <title>The genome sequence of Mycobacterium tuberculosis Erdman.</title>
        <authorList>
            <consortium name="The Broad Institute Genomics Platform"/>
            <consortium name="The Broad Institute Genome Sequencing Center for Infectious Disease"/>
            <person name="Earl A.M."/>
            <person name="Hung D."/>
            <person name="Gomez D."/>
            <person name="Hsueh P.R."/>
            <person name="Rozo J.C."/>
            <person name="Zambrano M.M."/>
            <person name="Desjardins C."/>
            <person name="Abeel T."/>
            <person name="Young S."/>
            <person name="Zeng Q."/>
            <person name="Gargeya S."/>
            <person name="Abouelleil A."/>
            <person name="Alvarado L."/>
            <person name="Chapman S.B."/>
            <person name="Gainer-Dewar J."/>
            <person name="Goldberg J."/>
            <person name="Griggs A."/>
            <person name="Gujja S."/>
            <person name="Hansen M."/>
            <person name="Howarth C."/>
            <person name="Imamovic A."/>
            <person name="Larimer J."/>
            <person name="Murphy C."/>
            <person name="Naylor J."/>
            <person name="Pearson M."/>
            <person name="Poon T.W."/>
            <person name="Priest M."/>
            <person name="Roberts A."/>
            <person name="Saif S."/>
            <person name="Shea T."/>
            <person name="Sykes S."/>
            <person name="Wortman J."/>
            <person name="Nusbaum C."/>
            <person name="Birren B."/>
        </authorList>
    </citation>
    <scope>NUCLEOTIDE SEQUENCE [LARGE SCALE GENOMIC DNA]</scope>
    <source>
        <strain>ATCC 35801 / TMC 107 / Erdman</strain>
    </source>
</reference>
<reference key="3">
    <citation type="journal article" date="2006" name="Mol. Microbiol.">
        <title>Role of the methylcitrate cycle in Mycobacterium tuberculosis metabolism, intracellular growth, and virulence.</title>
        <authorList>
            <person name="Munoz-Elias E.J."/>
            <person name="Upton A.M."/>
            <person name="Cherian J."/>
            <person name="McKinney J.D."/>
        </authorList>
    </citation>
    <scope>FUNCTION</scope>
    <scope>CATALYTIC ACTIVITY</scope>
    <scope>DISRUPTION PHENOTYPE</scope>
    <scope>INDUCTION</scope>
    <scope>SUBSTRATE SPECIFICITY</scope>
    <source>
        <strain>ATCC 35801 / TMC 107 / Erdman</strain>
    </source>
</reference>
<evidence type="ECO:0000250" key="1">
    <source>
        <dbReference type="UniProtKB" id="I6Y9Q3"/>
    </source>
</evidence>
<evidence type="ECO:0000250" key="2">
    <source>
        <dbReference type="UniProtKB" id="O34002"/>
    </source>
</evidence>
<evidence type="ECO:0000269" key="3">
    <source>
    </source>
</evidence>
<evidence type="ECO:0000303" key="4">
    <source>
    </source>
</evidence>
<evidence type="ECO:0000305" key="5"/>
<evidence type="ECO:0000305" key="6">
    <source>
    </source>
</evidence>
<dbReference type="EC" id="2.3.3.5" evidence="3"/>
<dbReference type="EC" id="2.3.3.16" evidence="3"/>
<dbReference type="EMBL" id="AP012340">
    <property type="protein sequence ID" value="BAL65070.1"/>
    <property type="molecule type" value="Genomic_DNA"/>
</dbReference>
<dbReference type="EMBL" id="JLBG01000002">
    <property type="protein sequence ID" value="KBK19227.1"/>
    <property type="molecule type" value="Genomic_DNA"/>
</dbReference>
<dbReference type="RefSeq" id="WP_003405909.1">
    <property type="nucleotide sequence ID" value="NZ_KK339487.1"/>
</dbReference>
<dbReference type="SMR" id="H8F0D7"/>
<dbReference type="KEGG" id="mtn:ERDMAN_1267"/>
<dbReference type="PATRIC" id="fig|652616.3.peg.1285"/>
<dbReference type="HOGENOM" id="CLU_025068_2_1_11"/>
<dbReference type="UniPathway" id="UPA00223">
    <property type="reaction ID" value="UER00717"/>
</dbReference>
<dbReference type="UniPathway" id="UPA00946"/>
<dbReference type="GO" id="GO:0005829">
    <property type="term" value="C:cytosol"/>
    <property type="evidence" value="ECO:0007669"/>
    <property type="project" value="TreeGrafter"/>
</dbReference>
<dbReference type="GO" id="GO:0050440">
    <property type="term" value="F:2-methylcitrate synthase activity"/>
    <property type="evidence" value="ECO:0000314"/>
    <property type="project" value="UniProtKB"/>
</dbReference>
<dbReference type="GO" id="GO:0004108">
    <property type="term" value="F:citrate (Si)-synthase activity"/>
    <property type="evidence" value="ECO:0007669"/>
    <property type="project" value="TreeGrafter"/>
</dbReference>
<dbReference type="GO" id="GO:0036440">
    <property type="term" value="F:citrate synthase activity"/>
    <property type="evidence" value="ECO:0000314"/>
    <property type="project" value="UniProtKB"/>
</dbReference>
<dbReference type="GO" id="GO:0005975">
    <property type="term" value="P:carbohydrate metabolic process"/>
    <property type="evidence" value="ECO:0007669"/>
    <property type="project" value="TreeGrafter"/>
</dbReference>
<dbReference type="GO" id="GO:0019679">
    <property type="term" value="P:propionate metabolic process, methylcitrate cycle"/>
    <property type="evidence" value="ECO:0000314"/>
    <property type="project" value="UniProtKB"/>
</dbReference>
<dbReference type="GO" id="GO:0006099">
    <property type="term" value="P:tricarboxylic acid cycle"/>
    <property type="evidence" value="ECO:0007669"/>
    <property type="project" value="UniProtKB-UniPathway"/>
</dbReference>
<dbReference type="CDD" id="cd06111">
    <property type="entry name" value="DsCS_like"/>
    <property type="match status" value="1"/>
</dbReference>
<dbReference type="FunFam" id="1.10.230.10:FF:000003">
    <property type="entry name" value="Citrate synthase"/>
    <property type="match status" value="1"/>
</dbReference>
<dbReference type="FunFam" id="1.10.580.10:FF:000012">
    <property type="entry name" value="Citrate synthase"/>
    <property type="match status" value="1"/>
</dbReference>
<dbReference type="Gene3D" id="1.10.580.10">
    <property type="entry name" value="Citrate Synthase, domain 1"/>
    <property type="match status" value="1"/>
</dbReference>
<dbReference type="Gene3D" id="1.10.230.10">
    <property type="entry name" value="Cytochrome P450-Terp, domain 2"/>
    <property type="match status" value="1"/>
</dbReference>
<dbReference type="InterPro" id="IPR011278">
    <property type="entry name" value="2-MeCitrate/Citrate_synth_II"/>
</dbReference>
<dbReference type="InterPro" id="IPR016142">
    <property type="entry name" value="Citrate_synth-like_lrg_a-sub"/>
</dbReference>
<dbReference type="InterPro" id="IPR016143">
    <property type="entry name" value="Citrate_synth-like_sm_a-sub"/>
</dbReference>
<dbReference type="InterPro" id="IPR002020">
    <property type="entry name" value="Citrate_synthase"/>
</dbReference>
<dbReference type="InterPro" id="IPR019810">
    <property type="entry name" value="Citrate_synthase_AS"/>
</dbReference>
<dbReference type="InterPro" id="IPR024176">
    <property type="entry name" value="Citrate_synthase_bac-typ"/>
</dbReference>
<dbReference type="InterPro" id="IPR036969">
    <property type="entry name" value="Citrate_synthase_sf"/>
</dbReference>
<dbReference type="NCBIfam" id="TIGR01800">
    <property type="entry name" value="cit_synth_II"/>
    <property type="match status" value="1"/>
</dbReference>
<dbReference type="NCBIfam" id="NF010636">
    <property type="entry name" value="PRK14033.1"/>
    <property type="match status" value="1"/>
</dbReference>
<dbReference type="PANTHER" id="PTHR11739">
    <property type="entry name" value="CITRATE SYNTHASE"/>
    <property type="match status" value="1"/>
</dbReference>
<dbReference type="PANTHER" id="PTHR11739:SF4">
    <property type="entry name" value="CITRATE SYNTHASE, PEROXISOMAL"/>
    <property type="match status" value="1"/>
</dbReference>
<dbReference type="Pfam" id="PF00285">
    <property type="entry name" value="Citrate_synt"/>
    <property type="match status" value="1"/>
</dbReference>
<dbReference type="PIRSF" id="PIRSF001369">
    <property type="entry name" value="Citrate_synth"/>
    <property type="match status" value="1"/>
</dbReference>
<dbReference type="PRINTS" id="PR00143">
    <property type="entry name" value="CITRTSNTHASE"/>
</dbReference>
<dbReference type="SUPFAM" id="SSF48256">
    <property type="entry name" value="Citrate synthase"/>
    <property type="match status" value="1"/>
</dbReference>
<dbReference type="PROSITE" id="PS00480">
    <property type="entry name" value="CITRATE_SYNTHASE"/>
    <property type="match status" value="1"/>
</dbReference>
<proteinExistence type="evidence at protein level"/>
<keyword id="KW-0808">Transferase</keyword>
<keyword id="KW-0816">Tricarboxylic acid cycle</keyword>
<accession>H8F0D7</accession>
<gene>
    <name type="primary">gltA1</name>
    <name type="ordered locus">ERDMAN_1267</name>
    <name type="ORF">Q643_01184</name>
</gene>
<protein>
    <recommendedName>
        <fullName evidence="4">2-methylcitrate synthase</fullName>
        <shortName evidence="4">2-MCS</shortName>
        <shortName evidence="4">MCS</shortName>
        <ecNumber evidence="3">2.3.3.5</ecNumber>
    </recommendedName>
    <alternativeName>
        <fullName evidence="4">Citrate synthase</fullName>
        <shortName evidence="4">CS</shortName>
        <ecNumber evidence="3">2.3.3.16</ecNumber>
    </alternativeName>
</protein>
<comment type="function">
    <text evidence="3">Involved in the catabolism of short chain fatty acids (SCFA) via the tricarboxylic acid (TCA)(acetyl degradation route) and via the 2-methylcitrate cycle I (propionate degradation route). Catalyzes the Claisen condensation of propionyl-CoA and oxaloacetate (OAA) to yield 2-methylcitrate (2-MC) and CoA. Also catalyzes the condensation of oxaloacetate with acetyl-CoA.</text>
</comment>
<comment type="catalytic activity">
    <reaction evidence="3">
        <text>propanoyl-CoA + oxaloacetate + H2O = (2S,3S)-2-methylcitrate + CoA + H(+)</text>
        <dbReference type="Rhea" id="RHEA:23780"/>
        <dbReference type="ChEBI" id="CHEBI:15377"/>
        <dbReference type="ChEBI" id="CHEBI:15378"/>
        <dbReference type="ChEBI" id="CHEBI:16452"/>
        <dbReference type="ChEBI" id="CHEBI:57287"/>
        <dbReference type="ChEBI" id="CHEBI:57392"/>
        <dbReference type="ChEBI" id="CHEBI:58853"/>
        <dbReference type="EC" id="2.3.3.5"/>
    </reaction>
</comment>
<comment type="catalytic activity">
    <reaction evidence="3">
        <text>oxaloacetate + acetyl-CoA + H2O = citrate + CoA + H(+)</text>
        <dbReference type="Rhea" id="RHEA:16845"/>
        <dbReference type="ChEBI" id="CHEBI:15377"/>
        <dbReference type="ChEBI" id="CHEBI:15378"/>
        <dbReference type="ChEBI" id="CHEBI:16452"/>
        <dbReference type="ChEBI" id="CHEBI:16947"/>
        <dbReference type="ChEBI" id="CHEBI:57287"/>
        <dbReference type="ChEBI" id="CHEBI:57288"/>
        <dbReference type="EC" id="2.3.3.16"/>
    </reaction>
</comment>
<comment type="pathway">
    <text evidence="6">Organic acid metabolism; propanoate degradation.</text>
</comment>
<comment type="pathway">
    <text evidence="6">Carbohydrate metabolism; tricarboxylic acid cycle; isocitrate from oxaloacetate: step 1/2.</text>
</comment>
<comment type="subunit">
    <text evidence="1">Homodimer.</text>
</comment>
<comment type="induction">
    <text evidence="3">By propionate, but not by glucose.</text>
</comment>
<comment type="disruption phenotype">
    <text evidence="3">Cells lacking both prpC and prpD are unable to grow on propionate media in vitro or in murine bone marrow-derived macrophages infected ex vivo. Paradoxically, bacterial growth and persistence, and tissue pathology, are indistinguishable in mice infected with wild-type.</text>
</comment>
<comment type="similarity">
    <text evidence="5">Belongs to the citrate synthase family.</text>
</comment>
<name>PRPC_MYCTE</name>
<feature type="chain" id="PRO_0000432970" description="2-methylcitrate synthase">
    <location>
        <begin position="1"/>
        <end position="393"/>
    </location>
</feature>
<feature type="active site" evidence="2">
    <location>
        <position position="242"/>
    </location>
</feature>
<feature type="active site" evidence="2">
    <location>
        <position position="281"/>
    </location>
</feature>
<feature type="active site" evidence="2">
    <location>
        <position position="332"/>
    </location>
</feature>
<feature type="binding site" evidence="1">
    <location>
        <position position="92"/>
    </location>
    <ligand>
        <name>substrate</name>
    </ligand>
</feature>
<feature type="binding site" evidence="1">
    <location>
        <position position="207"/>
    </location>
    <ligand>
        <name>substrate</name>
    </ligand>
</feature>
<feature type="binding site" evidence="2">
    <location>
        <begin position="275"/>
        <end position="279"/>
    </location>
    <ligand>
        <name>CoA</name>
        <dbReference type="ChEBI" id="CHEBI:57287"/>
    </ligand>
</feature>
<feature type="binding site" evidence="1">
    <location>
        <position position="290"/>
    </location>
    <ligand>
        <name>substrate</name>
    </ligand>
</feature>
<feature type="binding site" evidence="1">
    <location>
        <position position="357"/>
    </location>
    <ligand>
        <name>substrate</name>
    </ligand>
</feature>
<feature type="binding site" evidence="1">
    <location>
        <position position="376"/>
    </location>
    <ligand>
        <name>substrate</name>
    </ligand>
</feature>